<protein>
    <recommendedName>
        <fullName>Cytosolic Fe-S cluster assembly factor NAR1</fullName>
    </recommendedName>
    <alternativeName>
        <fullName>Nuclear architecture-related protein 1</fullName>
    </alternativeName>
</protein>
<comment type="function">
    <text evidence="1">Component of the cytosolic Fe/S protein assembly machinery. Required for maturation of extramitochondrial Fe/S proteins. May play a role in the transfer of pre-assembled Fe/S clusters to target apoproteins (By similarity).</text>
</comment>
<comment type="similarity">
    <text evidence="3">Belongs to the NARF family.</text>
</comment>
<keyword id="KW-0004">4Fe-4S</keyword>
<keyword id="KW-0408">Iron</keyword>
<keyword id="KW-0411">Iron-sulfur</keyword>
<keyword id="KW-0479">Metal-binding</keyword>
<keyword id="KW-1185">Reference proteome</keyword>
<name>NAR1_CRYNJ</name>
<feature type="chain" id="PRO_0000383726" description="Cytosolic Fe-S cluster assembly factor NAR1">
    <location>
        <begin position="1"/>
        <end position="650"/>
    </location>
</feature>
<feature type="binding site" evidence="2">
    <location>
        <position position="22"/>
    </location>
    <ligand>
        <name>[4Fe-4S] cluster</name>
        <dbReference type="ChEBI" id="CHEBI:49883"/>
        <label>1</label>
    </ligand>
</feature>
<feature type="binding site" evidence="2">
    <location>
        <position position="81"/>
    </location>
    <ligand>
        <name>[4Fe-4S] cluster</name>
        <dbReference type="ChEBI" id="CHEBI:49883"/>
        <label>1</label>
    </ligand>
</feature>
<feature type="binding site" evidence="2">
    <location>
        <position position="84"/>
    </location>
    <ligand>
        <name>[4Fe-4S] cluster</name>
        <dbReference type="ChEBI" id="CHEBI:49883"/>
        <label>1</label>
    </ligand>
</feature>
<feature type="binding site" evidence="2">
    <location>
        <position position="87"/>
    </location>
    <ligand>
        <name>[4Fe-4S] cluster</name>
        <dbReference type="ChEBI" id="CHEBI:49883"/>
        <label>1</label>
    </ligand>
</feature>
<feature type="binding site" evidence="2">
    <location>
        <position position="215"/>
    </location>
    <ligand>
        <name>[4Fe-4S] cluster</name>
        <dbReference type="ChEBI" id="CHEBI:49883"/>
        <label>2</label>
    </ligand>
</feature>
<feature type="binding site" evidence="2">
    <location>
        <position position="270"/>
    </location>
    <ligand>
        <name>[4Fe-4S] cluster</name>
        <dbReference type="ChEBI" id="CHEBI:49883"/>
        <label>2</label>
    </ligand>
</feature>
<feature type="binding site" evidence="2">
    <location>
        <position position="480"/>
    </location>
    <ligand>
        <name>[4Fe-4S] cluster</name>
        <dbReference type="ChEBI" id="CHEBI:49883"/>
        <label>2</label>
    </ligand>
</feature>
<feature type="binding site" evidence="2">
    <location>
        <position position="484"/>
    </location>
    <ligand>
        <name>[4Fe-4S] cluster</name>
        <dbReference type="ChEBI" id="CHEBI:49883"/>
        <label>2</label>
    </ligand>
</feature>
<gene>
    <name type="primary">NAR1</name>
    <name type="ordered locus">CNI03410</name>
</gene>
<dbReference type="EMBL" id="AE017349">
    <property type="protein sequence ID" value="AAW45585.1"/>
    <property type="molecule type" value="Genomic_DNA"/>
</dbReference>
<dbReference type="RefSeq" id="XP_572892.1">
    <property type="nucleotide sequence ID" value="XM_572892.1"/>
</dbReference>
<dbReference type="FunCoup" id="P0CP10">
    <property type="interactions" value="68"/>
</dbReference>
<dbReference type="STRING" id="214684.P0CP10"/>
<dbReference type="PaxDb" id="214684-P0CP10"/>
<dbReference type="EnsemblFungi" id="AAW45585">
    <property type="protein sequence ID" value="AAW45585"/>
    <property type="gene ID" value="CNI03410"/>
</dbReference>
<dbReference type="GeneID" id="3259452"/>
<dbReference type="KEGG" id="cne:CNI03410"/>
<dbReference type="VEuPathDB" id="FungiDB:CNI03410"/>
<dbReference type="eggNOG" id="KOG2439">
    <property type="taxonomic scope" value="Eukaryota"/>
</dbReference>
<dbReference type="HOGENOM" id="CLU_018240_0_2_1"/>
<dbReference type="InParanoid" id="P0CP10"/>
<dbReference type="OMA" id="GYLHHVL"/>
<dbReference type="OrthoDB" id="10253113at2759"/>
<dbReference type="Proteomes" id="UP000002149">
    <property type="component" value="Chromosome 9"/>
</dbReference>
<dbReference type="GO" id="GO:0097361">
    <property type="term" value="C:cytosolic [4Fe-4S] assembly targeting complex"/>
    <property type="evidence" value="ECO:0000318"/>
    <property type="project" value="GO_Central"/>
</dbReference>
<dbReference type="GO" id="GO:0051539">
    <property type="term" value="F:4 iron, 4 sulfur cluster binding"/>
    <property type="evidence" value="ECO:0007669"/>
    <property type="project" value="UniProtKB-KW"/>
</dbReference>
<dbReference type="GO" id="GO:0051536">
    <property type="term" value="F:iron-sulfur cluster binding"/>
    <property type="evidence" value="ECO:0000250"/>
    <property type="project" value="UniProtKB"/>
</dbReference>
<dbReference type="GO" id="GO:0046872">
    <property type="term" value="F:metal ion binding"/>
    <property type="evidence" value="ECO:0007669"/>
    <property type="project" value="UniProtKB-KW"/>
</dbReference>
<dbReference type="GO" id="GO:0016226">
    <property type="term" value="P:iron-sulfur cluster assembly"/>
    <property type="evidence" value="ECO:0000250"/>
    <property type="project" value="UniProtKB"/>
</dbReference>
<dbReference type="Gene3D" id="3.40.950.10">
    <property type="entry name" value="Fe-only Hydrogenase (Larger Subunit), Chain L, domain 3"/>
    <property type="match status" value="1"/>
</dbReference>
<dbReference type="InterPro" id="IPR050340">
    <property type="entry name" value="Cytosolic_Fe-S_CAF"/>
</dbReference>
<dbReference type="InterPro" id="IPR009016">
    <property type="entry name" value="Fe_hydrogenase"/>
</dbReference>
<dbReference type="InterPro" id="IPR004108">
    <property type="entry name" value="Fe_hydrogenase_lsu_C"/>
</dbReference>
<dbReference type="PANTHER" id="PTHR11615">
    <property type="entry name" value="NITRATE, FORMATE, IRON DEHYDROGENASE"/>
    <property type="match status" value="1"/>
</dbReference>
<dbReference type="Pfam" id="PF02906">
    <property type="entry name" value="Fe_hyd_lg_C"/>
    <property type="match status" value="1"/>
</dbReference>
<dbReference type="SUPFAM" id="SSF53920">
    <property type="entry name" value="Fe-only hydrogenase"/>
    <property type="match status" value="1"/>
</dbReference>
<sequence>MAFSGALTITDLDDFLTPSQACIIPVRNNKKPAEDEGPTEIHIDSNNNYYEVSTYPSVGHDDDIGNSKKALEKAEINLNDCLACSGCITSTESLLITMQSQNEILEFIKTNPTVVDPESPCHKPRLPILSISPQTLASLSAAYATASSRPPIPLLVLLRRIRAFLSQPEKGSWRVWDTTFARHMSLRESVVEFHERKDKKEKGKAAEMPMLASACPGWVCYAEKAQGDMLPLLSAARSSQGIIGALAKSWYGHKLQHKPDEIYHVTAMPCYDKKLEASRSDFYSSLYSTRDVDCVLTTGELDLLLQELGFDPHVPIANESTPSYSATEDSPFPELLTHEGSSSGSYLQTIIHDVQRSHPNPTRIITREIRGSTDNIEYLIQDTITGQIVFKGAKVYGFRNLQNLVRKVAKETGIGRSGRGAGAGKLSAAVAARRRKAKTAAPAATSATTSAEGTDVESIASLSLVSGEDKKLDFVEVMACPGGCVNGGGQMKPTVPTPSAPEAMEVDEEGYQRPLPDDGVAVAVNGGSNNVGTGTVAGMEEGMRWSTKEWVAKVEDIYWTGLPTPPASPPLTASNVNGFAPQVKTNGTTNGQVNNGVDRNLQSDQLAEEIIHEVCGDDASKRWDFMRTRFRKVESDVLSSGGVTHEAVKW</sequence>
<organism>
    <name type="scientific">Cryptococcus neoformans var. neoformans serotype D (strain JEC21 / ATCC MYA-565)</name>
    <name type="common">Filobasidiella neoformans</name>
    <dbReference type="NCBI Taxonomy" id="214684"/>
    <lineage>
        <taxon>Eukaryota</taxon>
        <taxon>Fungi</taxon>
        <taxon>Dikarya</taxon>
        <taxon>Basidiomycota</taxon>
        <taxon>Agaricomycotina</taxon>
        <taxon>Tremellomycetes</taxon>
        <taxon>Tremellales</taxon>
        <taxon>Cryptococcaceae</taxon>
        <taxon>Cryptococcus</taxon>
        <taxon>Cryptococcus neoformans species complex</taxon>
    </lineage>
</organism>
<accession>P0CP10</accession>
<accession>Q55MV8</accession>
<accession>Q5KB85</accession>
<reference key="1">
    <citation type="journal article" date="2005" name="Science">
        <title>The genome of the basidiomycetous yeast and human pathogen Cryptococcus neoformans.</title>
        <authorList>
            <person name="Loftus B.J."/>
            <person name="Fung E."/>
            <person name="Roncaglia P."/>
            <person name="Rowley D."/>
            <person name="Amedeo P."/>
            <person name="Bruno D."/>
            <person name="Vamathevan J."/>
            <person name="Miranda M."/>
            <person name="Anderson I.J."/>
            <person name="Fraser J.A."/>
            <person name="Allen J.E."/>
            <person name="Bosdet I.E."/>
            <person name="Brent M.R."/>
            <person name="Chiu R."/>
            <person name="Doering T.L."/>
            <person name="Donlin M.J."/>
            <person name="D'Souza C.A."/>
            <person name="Fox D.S."/>
            <person name="Grinberg V."/>
            <person name="Fu J."/>
            <person name="Fukushima M."/>
            <person name="Haas B.J."/>
            <person name="Huang J.C."/>
            <person name="Janbon G."/>
            <person name="Jones S.J.M."/>
            <person name="Koo H.L."/>
            <person name="Krzywinski M.I."/>
            <person name="Kwon-Chung K.J."/>
            <person name="Lengeler K.B."/>
            <person name="Maiti R."/>
            <person name="Marra M.A."/>
            <person name="Marra R.E."/>
            <person name="Mathewson C.A."/>
            <person name="Mitchell T.G."/>
            <person name="Pertea M."/>
            <person name="Riggs F.R."/>
            <person name="Salzberg S.L."/>
            <person name="Schein J.E."/>
            <person name="Shvartsbeyn A."/>
            <person name="Shin H."/>
            <person name="Shumway M."/>
            <person name="Specht C.A."/>
            <person name="Suh B.B."/>
            <person name="Tenney A."/>
            <person name="Utterback T.R."/>
            <person name="Wickes B.L."/>
            <person name="Wortman J.R."/>
            <person name="Wye N.H."/>
            <person name="Kronstad J.W."/>
            <person name="Lodge J.K."/>
            <person name="Heitman J."/>
            <person name="Davis R.W."/>
            <person name="Fraser C.M."/>
            <person name="Hyman R.W."/>
        </authorList>
    </citation>
    <scope>NUCLEOTIDE SEQUENCE [LARGE SCALE GENOMIC DNA]</scope>
    <source>
        <strain>JEC21 / ATCC MYA-565</strain>
    </source>
</reference>
<proteinExistence type="inferred from homology"/>
<evidence type="ECO:0000250" key="1"/>
<evidence type="ECO:0000255" key="2"/>
<evidence type="ECO:0000305" key="3"/>